<protein>
    <recommendedName>
        <fullName>Calcineurin B-like protein 3</fullName>
    </recommendedName>
    <alternativeName>
        <fullName>SOS3-like calcium-binding protein 6</fullName>
    </alternativeName>
</protein>
<keyword id="KW-0025">Alternative splicing</keyword>
<keyword id="KW-0449">Lipoprotein</keyword>
<keyword id="KW-0472">Membrane</keyword>
<keyword id="KW-0597">Phosphoprotein</keyword>
<keyword id="KW-1185">Reference proteome</keyword>
<keyword id="KW-0677">Repeat</keyword>
<keyword id="KW-0926">Vacuole</keyword>
<dbReference type="EMBL" id="AF076253">
    <property type="protein sequence ID" value="AAC26010.1"/>
    <property type="molecule type" value="mRNA"/>
</dbReference>
<dbReference type="EMBL" id="AL078465">
    <property type="protein sequence ID" value="CAB43853.1"/>
    <property type="molecule type" value="Genomic_DNA"/>
</dbReference>
<dbReference type="EMBL" id="AL161565">
    <property type="protein sequence ID" value="CAB79512.1"/>
    <property type="molecule type" value="Genomic_DNA"/>
</dbReference>
<dbReference type="EMBL" id="CP002687">
    <property type="protein sequence ID" value="AEE85220.1"/>
    <property type="molecule type" value="Genomic_DNA"/>
</dbReference>
<dbReference type="EMBL" id="CP002687">
    <property type="protein sequence ID" value="AEE85221.1"/>
    <property type="molecule type" value="Genomic_DNA"/>
</dbReference>
<dbReference type="EMBL" id="AY072441">
    <property type="protein sequence ID" value="AAL62433.1"/>
    <property type="molecule type" value="mRNA"/>
</dbReference>
<dbReference type="EMBL" id="AY128880">
    <property type="protein sequence ID" value="AAM91280.1"/>
    <property type="molecule type" value="mRNA"/>
</dbReference>
<dbReference type="EMBL" id="AY085344">
    <property type="protein sequence ID" value="AAM62575.1"/>
    <property type="molecule type" value="mRNA"/>
</dbReference>
<dbReference type="PIR" id="T08923">
    <property type="entry name" value="T08923"/>
</dbReference>
<dbReference type="RefSeq" id="NP_001320073.1">
    <molecule id="Q8LEM7-2"/>
    <property type="nucleotide sequence ID" value="NM_001341813.1"/>
</dbReference>
<dbReference type="RefSeq" id="NP_194387.1">
    <molecule id="Q8LEM7-1"/>
    <property type="nucleotide sequence ID" value="NM_118791.4"/>
</dbReference>
<dbReference type="SMR" id="Q8LEM7"/>
<dbReference type="BioGRID" id="14051">
    <property type="interactions" value="20"/>
</dbReference>
<dbReference type="DIP" id="DIP-33307N"/>
<dbReference type="FunCoup" id="Q8LEM7">
    <property type="interactions" value="1395"/>
</dbReference>
<dbReference type="IntAct" id="Q8LEM7">
    <property type="interactions" value="16"/>
</dbReference>
<dbReference type="STRING" id="3702.Q8LEM7"/>
<dbReference type="iPTMnet" id="Q8LEM7"/>
<dbReference type="SwissPalm" id="Q8LEM7"/>
<dbReference type="PaxDb" id="3702-AT4G26570.2"/>
<dbReference type="ProteomicsDB" id="220284">
    <molecule id="Q8LEM7-1"/>
</dbReference>
<dbReference type="EnsemblPlants" id="AT4G26570.1">
    <molecule id="Q8LEM7-1"/>
    <property type="protein sequence ID" value="AT4G26570.1"/>
    <property type="gene ID" value="AT4G26570"/>
</dbReference>
<dbReference type="EnsemblPlants" id="AT4G26570.2">
    <molecule id="Q8LEM7-2"/>
    <property type="protein sequence ID" value="AT4G26570.2"/>
    <property type="gene ID" value="AT4G26570"/>
</dbReference>
<dbReference type="GeneID" id="828764"/>
<dbReference type="Gramene" id="AT4G26570.1">
    <molecule id="Q8LEM7-1"/>
    <property type="protein sequence ID" value="AT4G26570.1"/>
    <property type="gene ID" value="AT4G26570"/>
</dbReference>
<dbReference type="Gramene" id="AT4G26570.2">
    <molecule id="Q8LEM7-2"/>
    <property type="protein sequence ID" value="AT4G26570.2"/>
    <property type="gene ID" value="AT4G26570"/>
</dbReference>
<dbReference type="KEGG" id="ath:AT4G26570"/>
<dbReference type="Araport" id="AT4G26570"/>
<dbReference type="TAIR" id="AT4G26570">
    <property type="gene designation" value="CBL3"/>
</dbReference>
<dbReference type="eggNOG" id="KOG0034">
    <property type="taxonomic scope" value="Eukaryota"/>
</dbReference>
<dbReference type="HOGENOM" id="CLU_061288_21_0_1"/>
<dbReference type="InParanoid" id="Q8LEM7"/>
<dbReference type="OMA" id="WYFGASH"/>
<dbReference type="OrthoDB" id="191686at2759"/>
<dbReference type="PhylomeDB" id="Q8LEM7"/>
<dbReference type="PRO" id="PR:Q8LEM7"/>
<dbReference type="Proteomes" id="UP000006548">
    <property type="component" value="Chromosome 4"/>
</dbReference>
<dbReference type="ExpressionAtlas" id="Q8LEM7">
    <property type="expression patterns" value="baseline and differential"/>
</dbReference>
<dbReference type="GO" id="GO:0005829">
    <property type="term" value="C:cytosol"/>
    <property type="evidence" value="ECO:0007005"/>
    <property type="project" value="TAIR"/>
</dbReference>
<dbReference type="GO" id="GO:0016020">
    <property type="term" value="C:membrane"/>
    <property type="evidence" value="ECO:0000314"/>
    <property type="project" value="TAIR"/>
</dbReference>
<dbReference type="GO" id="GO:0000325">
    <property type="term" value="C:plant-type vacuole"/>
    <property type="evidence" value="ECO:0007005"/>
    <property type="project" value="TAIR"/>
</dbReference>
<dbReference type="GO" id="GO:0009705">
    <property type="term" value="C:plant-type vacuole membrane"/>
    <property type="evidence" value="ECO:0000314"/>
    <property type="project" value="TAIR"/>
</dbReference>
<dbReference type="GO" id="GO:0005886">
    <property type="term" value="C:plasma membrane"/>
    <property type="evidence" value="ECO:0000314"/>
    <property type="project" value="TAIR"/>
</dbReference>
<dbReference type="GO" id="GO:0005509">
    <property type="term" value="F:calcium ion binding"/>
    <property type="evidence" value="ECO:0000250"/>
    <property type="project" value="TAIR"/>
</dbReference>
<dbReference type="GO" id="GO:0019900">
    <property type="term" value="F:kinase binding"/>
    <property type="evidence" value="ECO:0000353"/>
    <property type="project" value="UniProtKB"/>
</dbReference>
<dbReference type="GO" id="GO:0019722">
    <property type="term" value="P:calcium-mediated signaling"/>
    <property type="evidence" value="ECO:0007669"/>
    <property type="project" value="InterPro"/>
</dbReference>
<dbReference type="GO" id="GO:0005513">
    <property type="term" value="P:detection of calcium ion"/>
    <property type="evidence" value="ECO:0000250"/>
    <property type="project" value="TAIR"/>
</dbReference>
<dbReference type="GO" id="GO:0055075">
    <property type="term" value="P:potassium ion homeostasis"/>
    <property type="evidence" value="ECO:0000315"/>
    <property type="project" value="TAIR"/>
</dbReference>
<dbReference type="FunFam" id="1.10.238.10:FF:000073">
    <property type="entry name" value="calcineurin B-like protein 3"/>
    <property type="match status" value="1"/>
</dbReference>
<dbReference type="Gene3D" id="1.10.238.10">
    <property type="entry name" value="EF-hand"/>
    <property type="match status" value="1"/>
</dbReference>
<dbReference type="InterPro" id="IPR045198">
    <property type="entry name" value="CNBL1-10"/>
</dbReference>
<dbReference type="InterPro" id="IPR011992">
    <property type="entry name" value="EF-hand-dom_pair"/>
</dbReference>
<dbReference type="InterPro" id="IPR002048">
    <property type="entry name" value="EF_hand_dom"/>
</dbReference>
<dbReference type="PANTHER" id="PTHR23056">
    <property type="entry name" value="CALCINEURIN B"/>
    <property type="match status" value="1"/>
</dbReference>
<dbReference type="PANTHER" id="PTHR23056:SF116">
    <property type="entry name" value="CALCINEURIN B-LIKE PROTEIN 3-RELATED"/>
    <property type="match status" value="1"/>
</dbReference>
<dbReference type="Pfam" id="PF13202">
    <property type="entry name" value="EF-hand_5"/>
    <property type="match status" value="1"/>
</dbReference>
<dbReference type="Pfam" id="PF13499">
    <property type="entry name" value="EF-hand_7"/>
    <property type="match status" value="1"/>
</dbReference>
<dbReference type="PRINTS" id="PR00450">
    <property type="entry name" value="RECOVERIN"/>
</dbReference>
<dbReference type="SMART" id="SM00054">
    <property type="entry name" value="EFh"/>
    <property type="match status" value="3"/>
</dbReference>
<dbReference type="SUPFAM" id="SSF47473">
    <property type="entry name" value="EF-hand"/>
    <property type="match status" value="1"/>
</dbReference>
<dbReference type="PROSITE" id="PS50222">
    <property type="entry name" value="EF_HAND_2"/>
    <property type="match status" value="3"/>
</dbReference>
<feature type="chain" id="PRO_0000073504" description="Calcineurin B-like protein 3">
    <location>
        <begin position="1"/>
        <end position="226"/>
    </location>
</feature>
<feature type="domain" description="EF-hand 1" evidence="17">
    <location>
        <begin position="36"/>
        <end position="81"/>
    </location>
</feature>
<feature type="domain" description="EF-hand 2" evidence="3">
    <location>
        <begin position="82"/>
        <end position="117"/>
    </location>
</feature>
<feature type="domain" description="EF-hand 3" evidence="3">
    <location>
        <begin position="119"/>
        <end position="154"/>
    </location>
</feature>
<feature type="domain" description="EF-hand 4" evidence="3">
    <location>
        <begin position="163"/>
        <end position="198"/>
    </location>
</feature>
<feature type="site" description="Involved in dimerization" evidence="1">
    <location>
        <position position="155"/>
    </location>
</feature>
<feature type="modified residue" description="Phosphoserine" evidence="2">
    <location>
        <position position="216"/>
    </location>
</feature>
<feature type="splice variant" id="VSP_012328" description="In isoform 2." evidence="16">
    <original>R</original>
    <variation>RYQSQ</variation>
    <location>
        <position position="89"/>
    </location>
</feature>
<comment type="function">
    <text evidence="8 12">Acts as a calcium sensor. CBL proteins interact with CIPK serine-threonine protein kinases. Binds calcium ions. Binding of a CBL protein to the regulatory NAF domain of a CIPK protein lead to the activation of the kinase in a calcium-dependent manner. Mediates the activation of AKT1 by CIPK proteins (CIPK6, CIPK16, and CIPK23) in response to low potassium conditions and in the context of stomatal movement. Negatively regulates the enzyme activity of MTN1 in the presence of calcium.</text>
</comment>
<comment type="subunit">
    <text evidence="1 5 6 7 8 9 10 11 12 15">Homodimer (By similarity). Part of a K(+)-channel calcium-sensing kinase/phosphatase complex composed by a calcium sensor CBL (CBL1, CBL2, CBL3 or CBL9), a kinase CIPK (CIPK6, CIPK16 or CIPK23), a phosphatase PP2C (AIP1) and a K(+)-channel (AKT1). Interacts with PP2CA, CIPK1, CIPK2, CIPK3, CIPK4, CIPK6, CIPK7, CIPK11, CIPK12, CIPK13, CIPK14, CIPK16, CIPK23, and MTN1.</text>
</comment>
<comment type="interaction">
    <interactant intactId="EBI-637358">
        <id>Q8LEM7</id>
    </interactant>
    <interactant intactId="EBI-1748677">
        <id>Q8RWC9</id>
        <label>CIPK1</label>
    </interactant>
    <organismsDiffer>false</organismsDiffer>
    <experiments>4</experiments>
</comment>
<comment type="interaction">
    <interactant intactId="EBI-637358">
        <id>Q8LEM7</id>
    </interactant>
    <interactant intactId="EBI-537615">
        <id>O65554</id>
        <label>CIPK6</label>
    </interactant>
    <organismsDiffer>false</organismsDiffer>
    <experiments>4</experiments>
</comment>
<comment type="subcellular location">
    <subcellularLocation>
        <location evidence="10 12 13 14">Vacuole membrane</location>
        <topology evidence="10 12 13 14">Lipid-anchor</topology>
    </subcellularLocation>
    <text>Tonoplast localization abolished by 2-bromopalmitate (2-BP) treatment.</text>
</comment>
<comment type="alternative products">
    <event type="alternative splicing"/>
    <isoform>
        <id>Q8LEM7-1</id>
        <name>1</name>
        <sequence type="displayed"/>
    </isoform>
    <isoform>
        <id>Q8LEM7-2</id>
        <name>2</name>
        <sequence type="described" ref="VSP_012328"/>
    </isoform>
</comment>
<comment type="tissue specificity">
    <text evidence="4 12 13">Ubiquitous. Stronger expression in roots. Expressed in root tip and root hair zone, leaf veins, vascular bundles and vasculature of sepals.</text>
</comment>
<comment type="developmental stage">
    <text evidence="13">Expressed early during germination and increases to a peak level when seedlings are established.</text>
</comment>
<comment type="domain">
    <text evidence="9 10">The N-terminal 22 amino acids are sufficient for vacuolar membrane targeting. The internal domain (109-199) is sufficient for the interaction with MTN1.</text>
</comment>
<comment type="PTM">
    <text>S-acylated by PAT10.</text>
</comment>
<comment type="disruption phenotype">
    <text evidence="12 13">No visible phenotype when grown under normal conditions; due to partial redundancy with CLB2. Tolerant to low-K(+) stress. Clb2 and cbl3 double mutants show stunted growth, reduced fertility and necrotic lesions at leaf tips. They also have a reduced vacuolar H(+)-ATPase activity, are hypersensitive to excessive metal ions and are more tolerant to low-K(+) conditions.</text>
</comment>
<comment type="miscellaneous">
    <molecule>Isoform 2</molecule>
    <text evidence="17">May be due to a competing acceptor splice site.</text>
</comment>
<comment type="similarity">
    <text evidence="17">Belongs to the calcineurin regulatory subunit family.</text>
</comment>
<proteinExistence type="evidence at protein level"/>
<evidence type="ECO:0000250" key="1"/>
<evidence type="ECO:0000250" key="2">
    <source>
        <dbReference type="UniProtKB" id="Q8LAS7"/>
    </source>
</evidence>
<evidence type="ECO:0000255" key="3">
    <source>
        <dbReference type="PROSITE-ProRule" id="PRU00448"/>
    </source>
</evidence>
<evidence type="ECO:0000269" key="4">
    <source>
    </source>
</evidence>
<evidence type="ECO:0000269" key="5">
    <source>
    </source>
</evidence>
<evidence type="ECO:0000269" key="6">
    <source>
    </source>
</evidence>
<evidence type="ECO:0000269" key="7">
    <source>
    </source>
</evidence>
<evidence type="ECO:0000269" key="8">
    <source>
    </source>
</evidence>
<evidence type="ECO:0000269" key="9">
    <source>
    </source>
</evidence>
<evidence type="ECO:0000269" key="10">
    <source>
    </source>
</evidence>
<evidence type="ECO:0000269" key="11">
    <source>
    </source>
</evidence>
<evidence type="ECO:0000269" key="12">
    <source>
    </source>
</evidence>
<evidence type="ECO:0000269" key="13">
    <source>
    </source>
</evidence>
<evidence type="ECO:0000269" key="14">
    <source>
    </source>
</evidence>
<evidence type="ECO:0000269" key="15">
    <source>
    </source>
</evidence>
<evidence type="ECO:0000303" key="16">
    <source ref="5"/>
</evidence>
<evidence type="ECO:0000305" key="17"/>
<accession>Q8LEM7</accession>
<accession>O81447</accession>
<reference key="1">
    <citation type="journal article" date="1999" name="Proc. Natl. Acad. Sci. U.S.A.">
        <title>Genes for calcineurin B-like proteins in Arabidopsis are differentially regulated by stress signals.</title>
        <authorList>
            <person name="Kudla J."/>
            <person name="Xu Q."/>
            <person name="Harter K."/>
            <person name="Gruissem W."/>
            <person name="Luan S."/>
        </authorList>
    </citation>
    <scope>NUCLEOTIDE SEQUENCE [MRNA] (ISOFORM 1)</scope>
    <scope>TISSUE SPECIFICITY</scope>
    <source>
        <strain>cv. Columbia</strain>
    </source>
</reference>
<reference key="2">
    <citation type="journal article" date="1999" name="Nature">
        <title>Sequence and analysis of chromosome 4 of the plant Arabidopsis thaliana.</title>
        <authorList>
            <person name="Mayer K.F.X."/>
            <person name="Schueller C."/>
            <person name="Wambutt R."/>
            <person name="Murphy G."/>
            <person name="Volckaert G."/>
            <person name="Pohl T."/>
            <person name="Duesterhoeft A."/>
            <person name="Stiekema W."/>
            <person name="Entian K.-D."/>
            <person name="Terryn N."/>
            <person name="Harris B."/>
            <person name="Ansorge W."/>
            <person name="Brandt P."/>
            <person name="Grivell L.A."/>
            <person name="Rieger M."/>
            <person name="Weichselgartner M."/>
            <person name="de Simone V."/>
            <person name="Obermaier B."/>
            <person name="Mache R."/>
            <person name="Mueller M."/>
            <person name="Kreis M."/>
            <person name="Delseny M."/>
            <person name="Puigdomenech P."/>
            <person name="Watson M."/>
            <person name="Schmidtheini T."/>
            <person name="Reichert B."/>
            <person name="Portetelle D."/>
            <person name="Perez-Alonso M."/>
            <person name="Boutry M."/>
            <person name="Bancroft I."/>
            <person name="Vos P."/>
            <person name="Hoheisel J."/>
            <person name="Zimmermann W."/>
            <person name="Wedler H."/>
            <person name="Ridley P."/>
            <person name="Langham S.-A."/>
            <person name="McCullagh B."/>
            <person name="Bilham L."/>
            <person name="Robben J."/>
            <person name="van der Schueren J."/>
            <person name="Grymonprez B."/>
            <person name="Chuang Y.-J."/>
            <person name="Vandenbussche F."/>
            <person name="Braeken M."/>
            <person name="Weltjens I."/>
            <person name="Voet M."/>
            <person name="Bastiaens I."/>
            <person name="Aert R."/>
            <person name="Defoor E."/>
            <person name="Weitzenegger T."/>
            <person name="Bothe G."/>
            <person name="Ramsperger U."/>
            <person name="Hilbert H."/>
            <person name="Braun M."/>
            <person name="Holzer E."/>
            <person name="Brandt A."/>
            <person name="Peters S."/>
            <person name="van Staveren M."/>
            <person name="Dirkse W."/>
            <person name="Mooijman P."/>
            <person name="Klein Lankhorst R."/>
            <person name="Rose M."/>
            <person name="Hauf J."/>
            <person name="Koetter P."/>
            <person name="Berneiser S."/>
            <person name="Hempel S."/>
            <person name="Feldpausch M."/>
            <person name="Lamberth S."/>
            <person name="Van den Daele H."/>
            <person name="De Keyser A."/>
            <person name="Buysshaert C."/>
            <person name="Gielen J."/>
            <person name="Villarroel R."/>
            <person name="De Clercq R."/>
            <person name="van Montagu M."/>
            <person name="Rogers J."/>
            <person name="Cronin A."/>
            <person name="Quail M.A."/>
            <person name="Bray-Allen S."/>
            <person name="Clark L."/>
            <person name="Doggett J."/>
            <person name="Hall S."/>
            <person name="Kay M."/>
            <person name="Lennard N."/>
            <person name="McLay K."/>
            <person name="Mayes R."/>
            <person name="Pettett A."/>
            <person name="Rajandream M.A."/>
            <person name="Lyne M."/>
            <person name="Benes V."/>
            <person name="Rechmann S."/>
            <person name="Borkova D."/>
            <person name="Bloecker H."/>
            <person name="Scharfe M."/>
            <person name="Grimm M."/>
            <person name="Loehnert T.-H."/>
            <person name="Dose S."/>
            <person name="de Haan M."/>
            <person name="Maarse A.C."/>
            <person name="Schaefer M."/>
            <person name="Mueller-Auer S."/>
            <person name="Gabel C."/>
            <person name="Fuchs M."/>
            <person name="Fartmann B."/>
            <person name="Granderath K."/>
            <person name="Dauner D."/>
            <person name="Herzl A."/>
            <person name="Neumann S."/>
            <person name="Argiriou A."/>
            <person name="Vitale D."/>
            <person name="Liguori R."/>
            <person name="Piravandi E."/>
            <person name="Massenet O."/>
            <person name="Quigley F."/>
            <person name="Clabauld G."/>
            <person name="Muendlein A."/>
            <person name="Felber R."/>
            <person name="Schnabl S."/>
            <person name="Hiller R."/>
            <person name="Schmidt W."/>
            <person name="Lecharny A."/>
            <person name="Aubourg S."/>
            <person name="Chefdor F."/>
            <person name="Cooke R."/>
            <person name="Berger C."/>
            <person name="Monfort A."/>
            <person name="Casacuberta E."/>
            <person name="Gibbons T."/>
            <person name="Weber N."/>
            <person name="Vandenbol M."/>
            <person name="Bargues M."/>
            <person name="Terol J."/>
            <person name="Torres A."/>
            <person name="Perez-Perez A."/>
            <person name="Purnelle B."/>
            <person name="Bent E."/>
            <person name="Johnson S."/>
            <person name="Tacon D."/>
            <person name="Jesse T."/>
            <person name="Heijnen L."/>
            <person name="Schwarz S."/>
            <person name="Scholler P."/>
            <person name="Heber S."/>
            <person name="Francs P."/>
            <person name="Bielke C."/>
            <person name="Frishman D."/>
            <person name="Haase D."/>
            <person name="Lemcke K."/>
            <person name="Mewes H.-W."/>
            <person name="Stocker S."/>
            <person name="Zaccaria P."/>
            <person name="Bevan M."/>
            <person name="Wilson R.K."/>
            <person name="de la Bastide M."/>
            <person name="Habermann K."/>
            <person name="Parnell L."/>
            <person name="Dedhia N."/>
            <person name="Gnoj L."/>
            <person name="Schutz K."/>
            <person name="Huang E."/>
            <person name="Spiegel L."/>
            <person name="Sekhon M."/>
            <person name="Murray J."/>
            <person name="Sheet P."/>
            <person name="Cordes M."/>
            <person name="Abu-Threideh J."/>
            <person name="Stoneking T."/>
            <person name="Kalicki J."/>
            <person name="Graves T."/>
            <person name="Harmon G."/>
            <person name="Edwards J."/>
            <person name="Latreille P."/>
            <person name="Courtney L."/>
            <person name="Cloud J."/>
            <person name="Abbott A."/>
            <person name="Scott K."/>
            <person name="Johnson D."/>
            <person name="Minx P."/>
            <person name="Bentley D."/>
            <person name="Fulton B."/>
            <person name="Miller N."/>
            <person name="Greco T."/>
            <person name="Kemp K."/>
            <person name="Kramer J."/>
            <person name="Fulton L."/>
            <person name="Mardis E."/>
            <person name="Dante M."/>
            <person name="Pepin K."/>
            <person name="Hillier L.W."/>
            <person name="Nelson J."/>
            <person name="Spieth J."/>
            <person name="Ryan E."/>
            <person name="Andrews S."/>
            <person name="Geisel C."/>
            <person name="Layman D."/>
            <person name="Du H."/>
            <person name="Ali J."/>
            <person name="Berghoff A."/>
            <person name="Jones K."/>
            <person name="Drone K."/>
            <person name="Cotton M."/>
            <person name="Joshu C."/>
            <person name="Antonoiu B."/>
            <person name="Zidanic M."/>
            <person name="Strong C."/>
            <person name="Sun H."/>
            <person name="Lamar B."/>
            <person name="Yordan C."/>
            <person name="Ma P."/>
            <person name="Zhong J."/>
            <person name="Preston R."/>
            <person name="Vil D."/>
            <person name="Shekher M."/>
            <person name="Matero A."/>
            <person name="Shah R."/>
            <person name="Swaby I.K."/>
            <person name="O'Shaughnessy A."/>
            <person name="Rodriguez M."/>
            <person name="Hoffman J."/>
            <person name="Till S."/>
            <person name="Granat S."/>
            <person name="Shohdy N."/>
            <person name="Hasegawa A."/>
            <person name="Hameed A."/>
            <person name="Lodhi M."/>
            <person name="Johnson A."/>
            <person name="Chen E."/>
            <person name="Marra M.A."/>
            <person name="Martienssen R."/>
            <person name="McCombie W.R."/>
        </authorList>
    </citation>
    <scope>NUCLEOTIDE SEQUENCE [LARGE SCALE GENOMIC DNA]</scope>
    <source>
        <strain>cv. Columbia</strain>
    </source>
</reference>
<reference key="3">
    <citation type="journal article" date="2017" name="Plant J.">
        <title>Araport11: a complete reannotation of the Arabidopsis thaliana reference genome.</title>
        <authorList>
            <person name="Cheng C.Y."/>
            <person name="Krishnakumar V."/>
            <person name="Chan A.P."/>
            <person name="Thibaud-Nissen F."/>
            <person name="Schobel S."/>
            <person name="Town C.D."/>
        </authorList>
    </citation>
    <scope>GENOME REANNOTATION</scope>
    <source>
        <strain>cv. Columbia</strain>
    </source>
</reference>
<reference key="4">
    <citation type="journal article" date="2003" name="Science">
        <title>Empirical analysis of transcriptional activity in the Arabidopsis genome.</title>
        <authorList>
            <person name="Yamada K."/>
            <person name="Lim J."/>
            <person name="Dale J.M."/>
            <person name="Chen H."/>
            <person name="Shinn P."/>
            <person name="Palm C.J."/>
            <person name="Southwick A.M."/>
            <person name="Wu H.C."/>
            <person name="Kim C.J."/>
            <person name="Nguyen M."/>
            <person name="Pham P.K."/>
            <person name="Cheuk R.F."/>
            <person name="Karlin-Newmann G."/>
            <person name="Liu S.X."/>
            <person name="Lam B."/>
            <person name="Sakano H."/>
            <person name="Wu T."/>
            <person name="Yu G."/>
            <person name="Miranda M."/>
            <person name="Quach H.L."/>
            <person name="Tripp M."/>
            <person name="Chang C.H."/>
            <person name="Lee J.M."/>
            <person name="Toriumi M.J."/>
            <person name="Chan M.M."/>
            <person name="Tang C.C."/>
            <person name="Onodera C.S."/>
            <person name="Deng J.M."/>
            <person name="Akiyama K."/>
            <person name="Ansari Y."/>
            <person name="Arakawa T."/>
            <person name="Banh J."/>
            <person name="Banno F."/>
            <person name="Bowser L."/>
            <person name="Brooks S.Y."/>
            <person name="Carninci P."/>
            <person name="Chao Q."/>
            <person name="Choy N."/>
            <person name="Enju A."/>
            <person name="Goldsmith A.D."/>
            <person name="Gurjal M."/>
            <person name="Hansen N.F."/>
            <person name="Hayashizaki Y."/>
            <person name="Johnson-Hopson C."/>
            <person name="Hsuan V.W."/>
            <person name="Iida K."/>
            <person name="Karnes M."/>
            <person name="Khan S."/>
            <person name="Koesema E."/>
            <person name="Ishida J."/>
            <person name="Jiang P.X."/>
            <person name="Jones T."/>
            <person name="Kawai J."/>
            <person name="Kamiya A."/>
            <person name="Meyers C."/>
            <person name="Nakajima M."/>
            <person name="Narusaka M."/>
            <person name="Seki M."/>
            <person name="Sakurai T."/>
            <person name="Satou M."/>
            <person name="Tamse R."/>
            <person name="Vaysberg M."/>
            <person name="Wallender E.K."/>
            <person name="Wong C."/>
            <person name="Yamamura Y."/>
            <person name="Yuan S."/>
            <person name="Shinozaki K."/>
            <person name="Davis R.W."/>
            <person name="Theologis A."/>
            <person name="Ecker J.R."/>
        </authorList>
    </citation>
    <scope>NUCLEOTIDE SEQUENCE [LARGE SCALE MRNA] (ISOFORM 1)</scope>
    <source>
        <strain>cv. Columbia</strain>
    </source>
</reference>
<reference key="5">
    <citation type="submission" date="2002-03" db="EMBL/GenBank/DDBJ databases">
        <title>Full-length cDNA from Arabidopsis thaliana.</title>
        <authorList>
            <person name="Brover V.V."/>
            <person name="Troukhan M.E."/>
            <person name="Alexandrov N.A."/>
            <person name="Lu Y.-P."/>
            <person name="Flavell R.B."/>
            <person name="Feldmann K.A."/>
        </authorList>
    </citation>
    <scope>NUCLEOTIDE SEQUENCE [LARGE SCALE MRNA] (ISOFORM 2)</scope>
</reference>
<reference key="6">
    <citation type="journal article" date="1999" name="Plant Cell">
        <title>Novel protein kinases associated with calcineurin B-like calcium sensors in Arabidopsis.</title>
        <authorList>
            <person name="Shi J."/>
            <person name="Kim K.-N."/>
            <person name="Ritz O."/>
            <person name="Albrecht V."/>
            <person name="Gupta R."/>
            <person name="Harter K."/>
            <person name="Luan S."/>
            <person name="Kudla J."/>
        </authorList>
    </citation>
    <scope>INTERACTION WITH CIPK1; CIPK2; CIPK3 AND CIPK6</scope>
</reference>
<reference key="7">
    <citation type="journal article" date="2001" name="EMBO J.">
        <title>The NAF domain defines a novel protein-protein interaction module conserved in Ca(2+)-regulated kinases.</title>
        <authorList>
            <person name="Albrecht V."/>
            <person name="Ritz O."/>
            <person name="Linder S."/>
            <person name="Harter K."/>
            <person name="Kudla J."/>
        </authorList>
    </citation>
    <scope>INTERACTION WITH CIPK1; CIPK2; CIPK4; CIPK6; CIPK7; CIPK11; CIPK12 AND CIPK13</scope>
</reference>
<reference key="8">
    <citation type="journal article" date="2004" name="Plant Physiol.">
        <title>Calcium sensors and their interacting protein kinases: genomics of the Arabidopsis and rice CBL-CIPK signaling networks.</title>
        <authorList>
            <person name="Kolukisaoglu U."/>
            <person name="Weinl S."/>
            <person name="Blazevic D."/>
            <person name="Batistic O."/>
            <person name="Kudla J."/>
        </authorList>
    </citation>
    <scope>GENE FAMILY</scope>
</reference>
<reference key="9">
    <citation type="journal article" date="2006" name="Cell">
        <title>A protein kinase, interacting with two calcineurin B-like proteins, regulates K+ transporter AKT1 in Arabidopsis.</title>
        <authorList>
            <person name="Xu J."/>
            <person name="Li H.-D."/>
            <person name="Chen L.-Q."/>
            <person name="Wang Y."/>
            <person name="Liu L.-L."/>
            <person name="He L."/>
            <person name="Wu W.-H."/>
        </authorList>
    </citation>
    <scope>INTERACTION WITH CIPK23</scope>
</reference>
<reference key="10">
    <citation type="journal article" date="2007" name="Proc. Natl. Acad. Sci. U.S.A.">
        <title>A protein phosphorylation/dephosphorylation network regulates a plant potassium channel.</title>
        <authorList>
            <person name="Lee S.-C."/>
            <person name="Lan W.-Z."/>
            <person name="Kim B.-G."/>
            <person name="Li L."/>
            <person name="Cheong Y.H."/>
            <person name="Pandey G.K."/>
            <person name="Lu G."/>
            <person name="Buchanan B.B."/>
            <person name="Luan S."/>
        </authorList>
    </citation>
    <scope>FUNCTION</scope>
    <scope>INTERACTION WITH CIPK6; CIPK16 AND CIPK23</scope>
</reference>
<reference key="11">
    <citation type="journal article" date="2008" name="Plant Physiol.">
        <title>The Arabidopsis calcium sensor calcineurin B-like 3 inhibits the 5'-methylthioadenosine nucleosidase in a calcium-dependent manner.</title>
        <authorList>
            <person name="Oh S.I."/>
            <person name="Park J."/>
            <person name="Yoon S."/>
            <person name="Kim Y."/>
            <person name="Park S."/>
            <person name="Ryu M."/>
            <person name="Nam M.J."/>
            <person name="Ok S.H."/>
            <person name="Kim J.K."/>
            <person name="Shin J.S."/>
            <person name="Kim K.N."/>
        </authorList>
    </citation>
    <scope>INTERACTION WITH MTN1</scope>
    <scope>DOMAIN</scope>
</reference>
<reference key="12">
    <citation type="journal article" date="2010" name="Plant J.">
        <title>CBL-mediated targeting of CIPKs facilitates the decoding of calcium signals emanating from distinct cellular stores.</title>
        <authorList>
            <person name="Batistic O."/>
            <person name="Waadt R."/>
            <person name="Steinhorst L."/>
            <person name="Held K."/>
            <person name="Kudla J."/>
        </authorList>
    </citation>
    <scope>SUBCELLULAR LOCATION</scope>
    <scope>DOMAIN</scope>
    <scope>INTERACTION WITH CIPK14</scope>
</reference>
<reference key="13">
    <citation type="journal article" date="2011" name="Mol. Plant">
        <title>Mechanistic analysis of AKT1 regulation by the CBL-CIPK-PP2CA interactions.</title>
        <authorList>
            <person name="Lan W.Z."/>
            <person name="Lee S.C."/>
            <person name="Che Y.F."/>
            <person name="Jiang Y.Q."/>
            <person name="Luan S."/>
        </authorList>
    </citation>
    <scope>INTERACTION WITH PP2CA</scope>
</reference>
<reference key="14">
    <citation type="journal article" date="2012" name="Cell Res.">
        <title>Tonoplast calcium sensors CBL2 and CBL3 control plant growth and ion homeostasis through regulating V-ATPase activity in Arabidopsis.</title>
        <authorList>
            <person name="Tang R.J."/>
            <person name="Liu H."/>
            <person name="Yang Y."/>
            <person name="Yang L."/>
            <person name="Gao X.S."/>
            <person name="Garcia V.J."/>
            <person name="Luan S."/>
            <person name="Zhang H.X."/>
        </authorList>
    </citation>
    <scope>DEVELOPMENTAL STAGE</scope>
    <scope>TISSUE SPECIFICITY</scope>
    <scope>SUBCELLULAR LOCATION</scope>
    <scope>CALCIUM-BINDING</scope>
    <scope>DISRUPTION PHENOTYPE</scope>
</reference>
<reference key="15">
    <citation type="journal article" date="2013" name="Plant Cell">
        <title>Protein S-acyl transferase10 is critical for development and salt tolerance in Arabidopsis.</title>
        <authorList>
            <person name="Zhou L.Z."/>
            <person name="Li S."/>
            <person name="Feng Q.N."/>
            <person name="Zhang Y.L."/>
            <person name="Zhao X."/>
            <person name="Zeng Y.L."/>
            <person name="Wang H."/>
            <person name="Jiang L."/>
            <person name="Zhang Y."/>
        </authorList>
    </citation>
    <scope>SUBCELLULAR LOCATION</scope>
    <scope>PALMITOYLATION</scope>
</reference>
<reference key="16">
    <citation type="journal article" date="2013" name="Plant Physiol.">
        <title>A protein kinase, calcineurin B-like protein-interacting protein Kinase9, interacts with calcium sensor calcineurin B-like Protein3 and regulates potassium homeostasis under low-potassium stress in Arabidopsis.</title>
        <authorList>
            <person name="Liu L.L."/>
            <person name="Ren H.M."/>
            <person name="Chen L.Q."/>
            <person name="Wang Y."/>
            <person name="Wu W.H."/>
        </authorList>
    </citation>
    <scope>FUNCTION</scope>
    <scope>INTERACTION WITH CIPK9</scope>
    <scope>TISSUE SPECIFICITY</scope>
    <scope>SUBCELLULAR LOCATION</scope>
    <scope>DISRUPTION PHENOTYPE</scope>
</reference>
<reference key="17">
    <citation type="journal article" date="2014" name="Biochem. Biophys. Res. Commun.">
        <title>Arabidopsis CIPK14 positively regulates glucose response.</title>
        <authorList>
            <person name="Yan J."/>
            <person name="Niu F."/>
            <person name="Liu W.Z."/>
            <person name="Zhang H."/>
            <person name="Wang B."/>
            <person name="Lan W."/>
            <person name="Che Y."/>
            <person name="Yang B."/>
            <person name="Luan S."/>
            <person name="Jiang Y.Q."/>
        </authorList>
    </citation>
    <scope>INTERACTION WITH CIPK14</scope>
</reference>
<organism>
    <name type="scientific">Arabidopsis thaliana</name>
    <name type="common">Mouse-ear cress</name>
    <dbReference type="NCBI Taxonomy" id="3702"/>
    <lineage>
        <taxon>Eukaryota</taxon>
        <taxon>Viridiplantae</taxon>
        <taxon>Streptophyta</taxon>
        <taxon>Embryophyta</taxon>
        <taxon>Tracheophyta</taxon>
        <taxon>Spermatophyta</taxon>
        <taxon>Magnoliopsida</taxon>
        <taxon>eudicotyledons</taxon>
        <taxon>Gunneridae</taxon>
        <taxon>Pentapetalae</taxon>
        <taxon>rosids</taxon>
        <taxon>malvids</taxon>
        <taxon>Brassicales</taxon>
        <taxon>Brassicaceae</taxon>
        <taxon>Camelineae</taxon>
        <taxon>Arabidopsis</taxon>
    </lineage>
</organism>
<sequence>MSQCIDGFKHVCSSFFRCFDIDIYKQSGGLGDPELLARETVFSVSEIEALYELFKKISSAVIDDGLINKEEFQLALFKTNKKESLFADRVFDLFDTKHNGILGFEEFARALSVFHPNAPIEDKIDFSFQLYDLKQQGFIERQEVKQMVVATLAESGMNLSDEIIESIIDKTFEEADTKHDGRIDKEEWRTLVLRHPSLLKNMTLQYLKDITTTFPSFVFHSQVEDT</sequence>
<name>CNBL3_ARATH</name>
<gene>
    <name type="primary">CBL3</name>
    <name type="synonym">SCABP6</name>
    <name type="ordered locus">At4g26570</name>
    <name type="ORF">T15N24.20</name>
</gene>